<protein>
    <recommendedName>
        <fullName evidence="7">Small ribosomal subunit protein bS1m</fullName>
    </recommendedName>
    <alternativeName>
        <fullName>28S ribosomal protein S28, mitochondrial</fullName>
        <shortName>MRP-S28</shortName>
        <shortName>S28mt</shortName>
    </alternativeName>
</protein>
<evidence type="ECO:0000250" key="1">
    <source>
        <dbReference type="UniProtKB" id="Q9CY16"/>
    </source>
</evidence>
<evidence type="ECO:0000250" key="2">
    <source>
        <dbReference type="UniProtKB" id="Q9Y2Q9"/>
    </source>
</evidence>
<evidence type="ECO:0000256" key="3">
    <source>
        <dbReference type="SAM" id="MobiDB-lite"/>
    </source>
</evidence>
<evidence type="ECO:0000269" key="4">
    <source>
    </source>
</evidence>
<evidence type="ECO:0000269" key="5">
    <source>
    </source>
</evidence>
<evidence type="ECO:0000269" key="6">
    <source>
    </source>
</evidence>
<evidence type="ECO:0000305" key="7"/>
<evidence type="ECO:0007744" key="8">
    <source>
        <dbReference type="PDB" id="3JD5"/>
    </source>
</evidence>
<evidence type="ECO:0007829" key="9">
    <source>
        <dbReference type="PDB" id="6NEQ"/>
    </source>
</evidence>
<evidence type="ECO:0007829" key="10">
    <source>
        <dbReference type="PDB" id="6NF8"/>
    </source>
</evidence>
<name>RT28_BOVIN</name>
<reference key="1">
    <citation type="submission" date="2006-01" db="EMBL/GenBank/DDBJ databases">
        <authorList>
            <consortium name="NIH - Mammalian Gene Collection (MGC) project"/>
        </authorList>
    </citation>
    <scope>NUCLEOTIDE SEQUENCE [LARGE SCALE MRNA]</scope>
    <source>
        <strain>Hereford</strain>
        <tissue>Heart ventricle</tissue>
    </source>
</reference>
<reference key="2">
    <citation type="journal article" date="2000" name="J. Biol. Chem.">
        <title>Mammalian mitochondrial ribosomal proteins (4). Amino acid sequencing, characterization, and identification of corresponding gene sequences.</title>
        <authorList>
            <person name="O'Brien T.W."/>
            <person name="Liu J."/>
            <person name="Sylvester J.E."/>
            <person name="Mougey E.B."/>
            <person name="Fischel-Ghodsian N."/>
            <person name="Thiede B."/>
            <person name="Wittmann-Liebold B."/>
            <person name="Graack H.R."/>
        </authorList>
    </citation>
    <scope>PROTEIN SEQUENCE OF 73-85</scope>
    <scope>SUBCELLULAR LOCATION</scope>
</reference>
<reference key="3">
    <citation type="journal article" date="2000" name="J. Biol. Chem.">
        <title>A proteomics approach to the identification of mammalian mitochondrial small subunit ribosomal proteins.</title>
        <authorList>
            <person name="Koc E.C."/>
            <person name="Burkhart W."/>
            <person name="Blackburn K."/>
            <person name="Moseley A."/>
            <person name="Koc H."/>
            <person name="Spremulli L.L."/>
        </authorList>
    </citation>
    <scope>PROTEIN SEQUENCE OF 100-116</scope>
    <scope>SUBCELLULAR LOCATION</scope>
    <source>
        <tissue>Liver</tissue>
    </source>
</reference>
<reference evidence="8" key="4">
    <citation type="journal article" date="2014" name="Proc. Natl. Acad. Sci. U.S.A.">
        <title>Cryo-EM structure of the small subunit of the mammalian mitochondrial ribosome.</title>
        <authorList>
            <person name="Kaushal P.S."/>
            <person name="Sharma M.R."/>
            <person name="Booth T.M."/>
            <person name="Haque E.M."/>
            <person name="Tung C.S."/>
            <person name="Sanbonmatsu K.Y."/>
            <person name="Spremulli L.L."/>
            <person name="Agrawal R.K."/>
        </authorList>
    </citation>
    <scope>STRUCTURE BY ELECTRON MICROSCOPY (7.00 ANGSTROMS)</scope>
    <scope>SUBCELLULAR LOCATION</scope>
    <scope>SUBUNIT</scope>
</reference>
<keyword id="KW-0002">3D-structure</keyword>
<keyword id="KW-0007">Acetylation</keyword>
<keyword id="KW-0903">Direct protein sequencing</keyword>
<keyword id="KW-0496">Mitochondrion</keyword>
<keyword id="KW-0597">Phosphoprotein</keyword>
<keyword id="KW-1185">Reference proteome</keyword>
<keyword id="KW-0687">Ribonucleoprotein</keyword>
<keyword id="KW-0689">Ribosomal protein</keyword>
<keyword id="KW-0809">Transit peptide</keyword>
<organism>
    <name type="scientific">Bos taurus</name>
    <name type="common">Bovine</name>
    <dbReference type="NCBI Taxonomy" id="9913"/>
    <lineage>
        <taxon>Eukaryota</taxon>
        <taxon>Metazoa</taxon>
        <taxon>Chordata</taxon>
        <taxon>Craniata</taxon>
        <taxon>Vertebrata</taxon>
        <taxon>Euteleostomi</taxon>
        <taxon>Mammalia</taxon>
        <taxon>Eutheria</taxon>
        <taxon>Laurasiatheria</taxon>
        <taxon>Artiodactyla</taxon>
        <taxon>Ruminantia</taxon>
        <taxon>Pecora</taxon>
        <taxon>Bovidae</taxon>
        <taxon>Bovinae</taxon>
        <taxon>Bos</taxon>
    </lineage>
</organism>
<dbReference type="EMBL" id="BC112719">
    <property type="protein sequence ID" value="AAI12720.1"/>
    <property type="molecule type" value="mRNA"/>
</dbReference>
<dbReference type="RefSeq" id="NP_001039866.1">
    <property type="nucleotide sequence ID" value="NM_001046401.1"/>
</dbReference>
<dbReference type="PDB" id="3JD5">
    <property type="method" value="EM"/>
    <property type="resolution" value="7.00 A"/>
    <property type="chains" value="f=1-189"/>
</dbReference>
<dbReference type="PDB" id="6NEQ">
    <property type="method" value="EM"/>
    <property type="resolution" value="3.32 A"/>
    <property type="chains" value="f=1-189"/>
</dbReference>
<dbReference type="PDB" id="6NF8">
    <property type="method" value="EM"/>
    <property type="resolution" value="3.48 A"/>
    <property type="chains" value="f=1-189"/>
</dbReference>
<dbReference type="PDBsum" id="3JD5"/>
<dbReference type="PDBsum" id="6NEQ"/>
<dbReference type="PDBsum" id="6NF8"/>
<dbReference type="EMDB" id="EMD-9358"/>
<dbReference type="EMDB" id="EMD-9362"/>
<dbReference type="SMR" id="P82928"/>
<dbReference type="CORUM" id="P82928"/>
<dbReference type="FunCoup" id="P82928">
    <property type="interactions" value="642"/>
</dbReference>
<dbReference type="IntAct" id="P82928">
    <property type="interactions" value="2"/>
</dbReference>
<dbReference type="STRING" id="9913.ENSBTAP00000001718"/>
<dbReference type="PaxDb" id="9913-ENSBTAP00000001718"/>
<dbReference type="Ensembl" id="ENSBTAT00000001718.4">
    <property type="protein sequence ID" value="ENSBTAP00000001718.3"/>
    <property type="gene ID" value="ENSBTAG00000001302.4"/>
</dbReference>
<dbReference type="GeneID" id="535290"/>
<dbReference type="KEGG" id="bta:535290"/>
<dbReference type="CTD" id="28957"/>
<dbReference type="VEuPathDB" id="HostDB:ENSBTAG00000001302"/>
<dbReference type="VGNC" id="VGNC:31668">
    <property type="gene designation" value="MRPS28"/>
</dbReference>
<dbReference type="eggNOG" id="KOG4078">
    <property type="taxonomic scope" value="Eukaryota"/>
</dbReference>
<dbReference type="GeneTree" id="ENSGT00390000001057"/>
<dbReference type="HOGENOM" id="CLU_109102_2_0_1"/>
<dbReference type="InParanoid" id="P82928"/>
<dbReference type="OMA" id="CVCSRPT"/>
<dbReference type="OrthoDB" id="6020229at2759"/>
<dbReference type="TreeFam" id="TF315097"/>
<dbReference type="Reactome" id="R-BTA-5389840">
    <property type="pathway name" value="Mitochondrial translation elongation"/>
</dbReference>
<dbReference type="Reactome" id="R-BTA-5419276">
    <property type="pathway name" value="Mitochondrial translation termination"/>
</dbReference>
<dbReference type="Proteomes" id="UP000009136">
    <property type="component" value="Chromosome 14"/>
</dbReference>
<dbReference type="Bgee" id="ENSBTAG00000001302">
    <property type="expression patterns" value="Expressed in tongue muscle and 105 other cell types or tissues"/>
</dbReference>
<dbReference type="GO" id="GO:0005743">
    <property type="term" value="C:mitochondrial inner membrane"/>
    <property type="evidence" value="ECO:0000304"/>
    <property type="project" value="Reactome"/>
</dbReference>
<dbReference type="GO" id="GO:0005763">
    <property type="term" value="C:mitochondrial small ribosomal subunit"/>
    <property type="evidence" value="ECO:0000314"/>
    <property type="project" value="UniProtKB"/>
</dbReference>
<dbReference type="GO" id="GO:0032543">
    <property type="term" value="P:mitochondrial translation"/>
    <property type="evidence" value="ECO:0000250"/>
    <property type="project" value="UniProtKB"/>
</dbReference>
<dbReference type="InterPro" id="IPR019375">
    <property type="entry name" value="Ribosomal_bS1m"/>
</dbReference>
<dbReference type="PANTHER" id="PTHR13447">
    <property type="entry name" value="MITOCHONDRIAL 28S RIBOSOMAL PROTEIN S28"/>
    <property type="match status" value="1"/>
</dbReference>
<dbReference type="PANTHER" id="PTHR13447:SF2">
    <property type="entry name" value="SMALL RIBOSOMAL SUBUNIT PROTEIN BS1M"/>
    <property type="match status" value="1"/>
</dbReference>
<dbReference type="Pfam" id="PF10246">
    <property type="entry name" value="MRP-S35"/>
    <property type="match status" value="1"/>
</dbReference>
<comment type="subunit">
    <text evidence="6">Component of the mitochondrial ribosome small subunit (28S) which comprises a 12S rRNA and about 30 distinct proteins.</text>
</comment>
<comment type="subcellular location">
    <subcellularLocation>
        <location evidence="4 5 6">Mitochondrion</location>
    </subcellularLocation>
</comment>
<comment type="similarity">
    <text evidence="7">Belongs to the bacterial ribosomal protein bS1 family.</text>
</comment>
<proteinExistence type="evidence at protein level"/>
<accession>P82928</accession>
<accession>Q2KI96</accession>
<gene>
    <name type="primary">MRPS28</name>
</gene>
<sequence>MAALCRTRAVTAESHFLRVFLFSRSCRGAGTESGSGSESSNSTEPRPRPGGFASALERHSELQRKAELARTRGSPKNVESFASMLRHSPLTQMGPAKDKIVIGRIFHIVENDLYIDFGGKFHCVCKRPEVDGEKYQKGTRVRLRLLDLELTSRFLGATTDTTILEAEAVLLGLQESKDSKSKEERRENK</sequence>
<feature type="transit peptide" description="Mitochondrion" evidence="4">
    <location>
        <begin position="1"/>
        <end position="72"/>
    </location>
</feature>
<feature type="chain" id="PRO_0000087713" description="Small ribosomal subunit protein bS1m">
    <location>
        <begin position="73"/>
        <end position="189"/>
    </location>
</feature>
<feature type="region of interest" description="Disordered" evidence="3">
    <location>
        <begin position="30"/>
        <end position="53"/>
    </location>
</feature>
<feature type="compositionally biased region" description="Low complexity" evidence="3">
    <location>
        <begin position="30"/>
        <end position="44"/>
    </location>
</feature>
<feature type="modified residue" description="Phosphoserine" evidence="1">
    <location>
        <position position="74"/>
    </location>
</feature>
<feature type="modified residue" description="N6-acetyllysine" evidence="2">
    <location>
        <position position="134"/>
    </location>
</feature>
<feature type="sequence conflict" description="In Ref. 3; AA sequence." evidence="7" ref="3">
    <original>I</original>
    <variation>L</variation>
    <location>
        <position position="100"/>
    </location>
</feature>
<feature type="helix" evidence="9">
    <location>
        <begin position="81"/>
        <end position="86"/>
    </location>
</feature>
<feature type="helix" evidence="9">
    <location>
        <begin position="89"/>
        <end position="93"/>
    </location>
</feature>
<feature type="strand" evidence="9">
    <location>
        <begin position="97"/>
        <end position="115"/>
    </location>
</feature>
<feature type="strand" evidence="9">
    <location>
        <begin position="118"/>
        <end position="121"/>
    </location>
</feature>
<feature type="strand" evidence="9">
    <location>
        <begin position="123"/>
        <end position="126"/>
    </location>
</feature>
<feature type="turn" evidence="9">
    <location>
        <begin position="130"/>
        <end position="134"/>
    </location>
</feature>
<feature type="strand" evidence="9">
    <location>
        <begin position="140"/>
        <end position="149"/>
    </location>
</feature>
<feature type="strand" evidence="10">
    <location>
        <begin position="166"/>
        <end position="173"/>
    </location>
</feature>